<gene>
    <name type="primary">tbx-39</name>
    <name type="ORF">Y73F8A.16</name>
</gene>
<name>TBX39_CAEEL</name>
<comment type="interaction">
    <interactant intactId="EBI-2412056">
        <id>Q9NA56</id>
    </interactant>
    <interactant intactId="EBI-331440">
        <id>Q9XWH5</id>
        <label>CELE_Y57A10B.6</label>
    </interactant>
    <organismsDiffer>false</organismsDiffer>
    <experiments>4</experiments>
</comment>
<comment type="subcellular location">
    <subcellularLocation>
        <location evidence="1">Nucleus</location>
    </subcellularLocation>
</comment>
<proteinExistence type="evidence at protein level"/>
<evidence type="ECO:0000255" key="1">
    <source>
        <dbReference type="PROSITE-ProRule" id="PRU00201"/>
    </source>
</evidence>
<evidence type="ECO:0000256" key="2">
    <source>
        <dbReference type="SAM" id="MobiDB-lite"/>
    </source>
</evidence>
<dbReference type="EMBL" id="AL132862">
    <property type="protein sequence ID" value="CAB60541.1"/>
    <property type="molecule type" value="Genomic_DNA"/>
</dbReference>
<dbReference type="RefSeq" id="NP_502851.1">
    <property type="nucleotide sequence ID" value="NM_070450.1"/>
</dbReference>
<dbReference type="SMR" id="Q9NA56"/>
<dbReference type="BioGRID" id="55257">
    <property type="interactions" value="18"/>
</dbReference>
<dbReference type="FunCoup" id="Q9NA56">
    <property type="interactions" value="2"/>
</dbReference>
<dbReference type="IntAct" id="Q9NA56">
    <property type="interactions" value="18"/>
</dbReference>
<dbReference type="STRING" id="6239.Y73F8A.16.1"/>
<dbReference type="PaxDb" id="6239-Y73F8A.16"/>
<dbReference type="EnsemblMetazoa" id="Y73F8A.16.1">
    <property type="protein sequence ID" value="Y73F8A.16.1"/>
    <property type="gene ID" value="WBGene00006558"/>
</dbReference>
<dbReference type="GeneID" id="190678"/>
<dbReference type="KEGG" id="cel:CELE_Y73F8A.16"/>
<dbReference type="UCSC" id="Y73F8A.16">
    <property type="organism name" value="c. elegans"/>
</dbReference>
<dbReference type="AGR" id="WB:WBGene00006558"/>
<dbReference type="CTD" id="190678"/>
<dbReference type="WormBase" id="Y73F8A.16">
    <property type="protein sequence ID" value="CE22985"/>
    <property type="gene ID" value="WBGene00006558"/>
    <property type="gene designation" value="tbx-39"/>
</dbReference>
<dbReference type="eggNOG" id="KOG3585">
    <property type="taxonomic scope" value="Eukaryota"/>
</dbReference>
<dbReference type="GeneTree" id="ENSGT00970000196896"/>
<dbReference type="HOGENOM" id="CLU_728115_0_0_1"/>
<dbReference type="InParanoid" id="Q9NA56"/>
<dbReference type="OMA" id="HALNTEM"/>
<dbReference type="OrthoDB" id="5867717at2759"/>
<dbReference type="PhylomeDB" id="Q9NA56"/>
<dbReference type="SignaLink" id="Q9NA56"/>
<dbReference type="PRO" id="PR:Q9NA56"/>
<dbReference type="Proteomes" id="UP000001940">
    <property type="component" value="Chromosome IV"/>
</dbReference>
<dbReference type="Bgee" id="WBGene00006558">
    <property type="expression patterns" value="Expressed in embryo and 1 other cell type or tissue"/>
</dbReference>
<dbReference type="GO" id="GO:0000785">
    <property type="term" value="C:chromatin"/>
    <property type="evidence" value="ECO:0000318"/>
    <property type="project" value="GO_Central"/>
</dbReference>
<dbReference type="GO" id="GO:0005634">
    <property type="term" value="C:nucleus"/>
    <property type="evidence" value="ECO:0000318"/>
    <property type="project" value="GO_Central"/>
</dbReference>
<dbReference type="GO" id="GO:0000981">
    <property type="term" value="F:DNA-binding transcription factor activity, RNA polymerase II-specific"/>
    <property type="evidence" value="ECO:0000318"/>
    <property type="project" value="GO_Central"/>
</dbReference>
<dbReference type="GO" id="GO:0000978">
    <property type="term" value="F:RNA polymerase II cis-regulatory region sequence-specific DNA binding"/>
    <property type="evidence" value="ECO:0000318"/>
    <property type="project" value="GO_Central"/>
</dbReference>
<dbReference type="GO" id="GO:0001708">
    <property type="term" value="P:cell fate specification"/>
    <property type="evidence" value="ECO:0000318"/>
    <property type="project" value="GO_Central"/>
</dbReference>
<dbReference type="GO" id="GO:0045893">
    <property type="term" value="P:positive regulation of DNA-templated transcription"/>
    <property type="evidence" value="ECO:0007669"/>
    <property type="project" value="InterPro"/>
</dbReference>
<dbReference type="GO" id="GO:0006357">
    <property type="term" value="P:regulation of transcription by RNA polymerase II"/>
    <property type="evidence" value="ECO:0000318"/>
    <property type="project" value="GO_Central"/>
</dbReference>
<dbReference type="CDD" id="cd00182">
    <property type="entry name" value="T-box"/>
    <property type="match status" value="1"/>
</dbReference>
<dbReference type="FunFam" id="2.60.40.820:FF:000018">
    <property type="entry name" value="Putative T-box protein 35"/>
    <property type="match status" value="1"/>
</dbReference>
<dbReference type="Gene3D" id="2.60.40.820">
    <property type="entry name" value="Transcription factor, T-box"/>
    <property type="match status" value="1"/>
</dbReference>
<dbReference type="InterPro" id="IPR008967">
    <property type="entry name" value="p53-like_TF_DNA-bd_sf"/>
</dbReference>
<dbReference type="InterPro" id="IPR046360">
    <property type="entry name" value="T-box_DNA-bd"/>
</dbReference>
<dbReference type="InterPro" id="IPR036960">
    <property type="entry name" value="T-box_sf"/>
</dbReference>
<dbReference type="InterPro" id="IPR001699">
    <property type="entry name" value="TF_T-box"/>
</dbReference>
<dbReference type="InterPro" id="IPR018186">
    <property type="entry name" value="TF_T-box_CS"/>
</dbReference>
<dbReference type="PANTHER" id="PTHR11267:SF196">
    <property type="entry name" value="T-BOX PROTEIN 30_42-RELATED"/>
    <property type="match status" value="1"/>
</dbReference>
<dbReference type="PANTHER" id="PTHR11267">
    <property type="entry name" value="T-BOX PROTEIN-RELATED"/>
    <property type="match status" value="1"/>
</dbReference>
<dbReference type="Pfam" id="PF00907">
    <property type="entry name" value="T-box"/>
    <property type="match status" value="1"/>
</dbReference>
<dbReference type="PRINTS" id="PR00937">
    <property type="entry name" value="TBOX"/>
</dbReference>
<dbReference type="SMART" id="SM00425">
    <property type="entry name" value="TBOX"/>
    <property type="match status" value="1"/>
</dbReference>
<dbReference type="SUPFAM" id="SSF49417">
    <property type="entry name" value="p53-like transcription factors"/>
    <property type="match status" value="1"/>
</dbReference>
<dbReference type="PROSITE" id="PS01264">
    <property type="entry name" value="TBOX_2"/>
    <property type="match status" value="1"/>
</dbReference>
<dbReference type="PROSITE" id="PS50252">
    <property type="entry name" value="TBOX_3"/>
    <property type="match status" value="1"/>
</dbReference>
<feature type="chain" id="PRO_0000184484" description="Putative T-box protein 39">
    <location>
        <begin position="1"/>
        <end position="396"/>
    </location>
</feature>
<feature type="DNA-binding region" description="T-box" evidence="1">
    <location>
        <begin position="11"/>
        <end position="192"/>
    </location>
</feature>
<feature type="region of interest" description="Disordered" evidence="2">
    <location>
        <begin position="185"/>
        <end position="215"/>
    </location>
</feature>
<feature type="compositionally biased region" description="Basic and acidic residues" evidence="2">
    <location>
        <begin position="193"/>
        <end position="215"/>
    </location>
</feature>
<reference key="1">
    <citation type="journal article" date="1998" name="Science">
        <title>Genome sequence of the nematode C. elegans: a platform for investigating biology.</title>
        <authorList>
            <consortium name="The C. elegans sequencing consortium"/>
        </authorList>
    </citation>
    <scope>NUCLEOTIDE SEQUENCE [LARGE SCALE GENOMIC DNA]</scope>
    <source>
        <strain>Bristol N2</strain>
    </source>
</reference>
<organism>
    <name type="scientific">Caenorhabditis elegans</name>
    <dbReference type="NCBI Taxonomy" id="6239"/>
    <lineage>
        <taxon>Eukaryota</taxon>
        <taxon>Metazoa</taxon>
        <taxon>Ecdysozoa</taxon>
        <taxon>Nematoda</taxon>
        <taxon>Chromadorea</taxon>
        <taxon>Rhabditida</taxon>
        <taxon>Rhabditina</taxon>
        <taxon>Rhabditomorpha</taxon>
        <taxon>Rhabditoidea</taxon>
        <taxon>Rhabditidae</taxon>
        <taxon>Peloderinae</taxon>
        <taxon>Caenorhabditis</taxon>
    </lineage>
</organism>
<sequence length="396" mass="46381">MFSQAQFNVTMAEEDRWKQWYPNMEMIVNNKGPKLIFPELNFNITGLEEKSRYVVLLSIEKYDNIRYGYRNGKWGPSKVRHATKKEQEIKYFLHPDGTKLGKELMKETIKFDTVRITNHKKFMDKDNVFFVETMHKYVPVLTVKNITNVESANHSMRMEVAQFFPVTVYNQESIGNWKSKFHKNSTYGNRLDGGNKRKNTDSSEERTSKRSKNETEIAVSDILQVASQSENYNESTNSGRLQNEISSSIHQFPSTSYQNQYPHAYPTVNTPPIYVQQFTALFDEIHNQFDPKTKQNRVAKNVQYLSSVPQFAINQKENIHQNAPDYPVSQFPNQYPYGSYPYYYPYFQSSQQFPHLNYSMNNSIYSDSSFQSSFSAENSYFDENGNPIHYPYYSSN</sequence>
<protein>
    <recommendedName>
        <fullName>Putative T-box protein 39</fullName>
    </recommendedName>
</protein>
<accession>Q9NA56</accession>
<keyword id="KW-0238">DNA-binding</keyword>
<keyword id="KW-0539">Nucleus</keyword>
<keyword id="KW-1185">Reference proteome</keyword>
<keyword id="KW-0804">Transcription</keyword>
<keyword id="KW-0805">Transcription regulation</keyword>